<keyword id="KW-0028">Amino-acid biosynthesis</keyword>
<keyword id="KW-0170">Cobalt</keyword>
<keyword id="KW-0220">Diaminopimelate biosynthesis</keyword>
<keyword id="KW-0378">Hydrolase</keyword>
<keyword id="KW-0457">Lysine biosynthesis</keyword>
<keyword id="KW-0479">Metal-binding</keyword>
<keyword id="KW-0862">Zinc</keyword>
<feature type="chain" id="PRO_0000375493" description="Succinyl-diaminopimelate desuccinylase">
    <location>
        <begin position="1"/>
        <end position="375"/>
    </location>
</feature>
<feature type="active site" evidence="1">
    <location>
        <position position="68"/>
    </location>
</feature>
<feature type="active site" description="Proton acceptor" evidence="1">
    <location>
        <position position="133"/>
    </location>
</feature>
<feature type="binding site" evidence="1">
    <location>
        <position position="66"/>
    </location>
    <ligand>
        <name>Zn(2+)</name>
        <dbReference type="ChEBI" id="CHEBI:29105"/>
        <label>1</label>
    </ligand>
</feature>
<feature type="binding site" evidence="1">
    <location>
        <position position="99"/>
    </location>
    <ligand>
        <name>Zn(2+)</name>
        <dbReference type="ChEBI" id="CHEBI:29105"/>
        <label>1</label>
    </ligand>
</feature>
<feature type="binding site" evidence="1">
    <location>
        <position position="99"/>
    </location>
    <ligand>
        <name>Zn(2+)</name>
        <dbReference type="ChEBI" id="CHEBI:29105"/>
        <label>2</label>
    </ligand>
</feature>
<feature type="binding site" evidence="1">
    <location>
        <position position="134"/>
    </location>
    <ligand>
        <name>Zn(2+)</name>
        <dbReference type="ChEBI" id="CHEBI:29105"/>
        <label>2</label>
    </ligand>
</feature>
<feature type="binding site" evidence="1">
    <location>
        <position position="162"/>
    </location>
    <ligand>
        <name>Zn(2+)</name>
        <dbReference type="ChEBI" id="CHEBI:29105"/>
        <label>1</label>
    </ligand>
</feature>
<feature type="binding site" evidence="1">
    <location>
        <position position="348"/>
    </location>
    <ligand>
        <name>Zn(2+)</name>
        <dbReference type="ChEBI" id="CHEBI:29105"/>
        <label>2</label>
    </ligand>
</feature>
<protein>
    <recommendedName>
        <fullName evidence="1">Succinyl-diaminopimelate desuccinylase</fullName>
        <shortName evidence="1">SDAP desuccinylase</shortName>
        <ecNumber evidence="1">3.5.1.18</ecNumber>
    </recommendedName>
    <alternativeName>
        <fullName evidence="1">N-succinyl-LL-2,6-diaminoheptanedioate amidohydrolase</fullName>
    </alternativeName>
</protein>
<gene>
    <name evidence="1" type="primary">dapE</name>
    <name type="ordered locus">BUAPTUC7_094</name>
</gene>
<sequence length="375" mass="41250">MTCSITELAKKLISIPSVSPKDLGCQDIIIKRLCAIGFDIKRVNVNDTKNFWAFRGTGKTLTFAGHTDVVPIGQDKDWQTDPFQPVIRSGYLFGRGSADMKGALAAMITAAERFVNKFPNHKGRLSFLITSDEESSAVDGTIKVVEYLMSKRDMIDYCIVGEPSSTNIVGDVIKNGRRGSITANITIHGIQGHIAYPDLADNPIHKGLPVILKILSIKLDSGNDFFLPSSINIANIHAGNGFNNVIPGSLFVQFNIRFSSEVSEKHIQSQIVNILNSNDINYSIEWLFSGKPFITKKGLLIDTVIQSIFYFNKKKPILSTSGGTSDGRFIALMGSEVVELGLVNNTIHKVNECVKISDLKLLSCMYEDIMKNLLS</sequence>
<dbReference type="EC" id="3.5.1.18" evidence="1"/>
<dbReference type="EMBL" id="CP001158">
    <property type="protein sequence ID" value="ACL29916.1"/>
    <property type="molecule type" value="Genomic_DNA"/>
</dbReference>
<dbReference type="RefSeq" id="WP_009874048.1">
    <property type="nucleotide sequence ID" value="NC_011834.1"/>
</dbReference>
<dbReference type="SMR" id="B8D701"/>
<dbReference type="KEGG" id="bau:BUAPTUC7_094"/>
<dbReference type="HOGENOM" id="CLU_021802_4_0_6"/>
<dbReference type="UniPathway" id="UPA00034">
    <property type="reaction ID" value="UER00021"/>
</dbReference>
<dbReference type="GO" id="GO:0008777">
    <property type="term" value="F:acetylornithine deacetylase activity"/>
    <property type="evidence" value="ECO:0007669"/>
    <property type="project" value="TreeGrafter"/>
</dbReference>
<dbReference type="GO" id="GO:0050897">
    <property type="term" value="F:cobalt ion binding"/>
    <property type="evidence" value="ECO:0007669"/>
    <property type="project" value="UniProtKB-UniRule"/>
</dbReference>
<dbReference type="GO" id="GO:0009014">
    <property type="term" value="F:succinyl-diaminopimelate desuccinylase activity"/>
    <property type="evidence" value="ECO:0007669"/>
    <property type="project" value="UniProtKB-UniRule"/>
</dbReference>
<dbReference type="GO" id="GO:0008270">
    <property type="term" value="F:zinc ion binding"/>
    <property type="evidence" value="ECO:0007669"/>
    <property type="project" value="UniProtKB-UniRule"/>
</dbReference>
<dbReference type="GO" id="GO:0019877">
    <property type="term" value="P:diaminopimelate biosynthetic process"/>
    <property type="evidence" value="ECO:0007669"/>
    <property type="project" value="UniProtKB-UniRule"/>
</dbReference>
<dbReference type="GO" id="GO:0006526">
    <property type="term" value="P:L-arginine biosynthetic process"/>
    <property type="evidence" value="ECO:0007669"/>
    <property type="project" value="TreeGrafter"/>
</dbReference>
<dbReference type="GO" id="GO:0009089">
    <property type="term" value="P:lysine biosynthetic process via diaminopimelate"/>
    <property type="evidence" value="ECO:0007669"/>
    <property type="project" value="UniProtKB-UniRule"/>
</dbReference>
<dbReference type="CDD" id="cd03891">
    <property type="entry name" value="M20_DapE_proteobac"/>
    <property type="match status" value="1"/>
</dbReference>
<dbReference type="FunFam" id="3.40.630.10:FF:000005">
    <property type="entry name" value="Succinyl-diaminopimelate desuccinylase"/>
    <property type="match status" value="1"/>
</dbReference>
<dbReference type="Gene3D" id="3.40.630.10">
    <property type="entry name" value="Zn peptidases"/>
    <property type="match status" value="2"/>
</dbReference>
<dbReference type="HAMAP" id="MF_01690">
    <property type="entry name" value="DapE"/>
    <property type="match status" value="1"/>
</dbReference>
<dbReference type="InterPro" id="IPR001261">
    <property type="entry name" value="ArgE/DapE_CS"/>
</dbReference>
<dbReference type="InterPro" id="IPR036264">
    <property type="entry name" value="Bact_exopeptidase_dim_dom"/>
</dbReference>
<dbReference type="InterPro" id="IPR005941">
    <property type="entry name" value="DapE_proteobac"/>
</dbReference>
<dbReference type="InterPro" id="IPR002933">
    <property type="entry name" value="Peptidase_M20"/>
</dbReference>
<dbReference type="InterPro" id="IPR011650">
    <property type="entry name" value="Peptidase_M20_dimer"/>
</dbReference>
<dbReference type="InterPro" id="IPR050072">
    <property type="entry name" value="Peptidase_M20A"/>
</dbReference>
<dbReference type="NCBIfam" id="TIGR01246">
    <property type="entry name" value="dapE_proteo"/>
    <property type="match status" value="1"/>
</dbReference>
<dbReference type="NCBIfam" id="NF009557">
    <property type="entry name" value="PRK13009.1"/>
    <property type="match status" value="1"/>
</dbReference>
<dbReference type="PANTHER" id="PTHR43808">
    <property type="entry name" value="ACETYLORNITHINE DEACETYLASE"/>
    <property type="match status" value="1"/>
</dbReference>
<dbReference type="PANTHER" id="PTHR43808:SF31">
    <property type="entry name" value="N-ACETYL-L-CITRULLINE DEACETYLASE"/>
    <property type="match status" value="1"/>
</dbReference>
<dbReference type="Pfam" id="PF07687">
    <property type="entry name" value="M20_dimer"/>
    <property type="match status" value="1"/>
</dbReference>
<dbReference type="Pfam" id="PF01546">
    <property type="entry name" value="Peptidase_M20"/>
    <property type="match status" value="1"/>
</dbReference>
<dbReference type="SUPFAM" id="SSF55031">
    <property type="entry name" value="Bacterial exopeptidase dimerisation domain"/>
    <property type="match status" value="1"/>
</dbReference>
<dbReference type="SUPFAM" id="SSF53187">
    <property type="entry name" value="Zn-dependent exopeptidases"/>
    <property type="match status" value="1"/>
</dbReference>
<dbReference type="PROSITE" id="PS00759">
    <property type="entry name" value="ARGE_DAPE_CPG2_2"/>
    <property type="match status" value="1"/>
</dbReference>
<comment type="function">
    <text evidence="1">Catalyzes the hydrolysis of N-succinyl-L,L-diaminopimelic acid (SDAP), forming succinate and LL-2,6-diaminopimelate (DAP), an intermediate involved in the bacterial biosynthesis of lysine and meso-diaminopimelic acid, an essential component of bacterial cell walls.</text>
</comment>
<comment type="catalytic activity">
    <reaction evidence="1">
        <text>N-succinyl-(2S,6S)-2,6-diaminopimelate + H2O = (2S,6S)-2,6-diaminopimelate + succinate</text>
        <dbReference type="Rhea" id="RHEA:22608"/>
        <dbReference type="ChEBI" id="CHEBI:15377"/>
        <dbReference type="ChEBI" id="CHEBI:30031"/>
        <dbReference type="ChEBI" id="CHEBI:57609"/>
        <dbReference type="ChEBI" id="CHEBI:58087"/>
        <dbReference type="EC" id="3.5.1.18"/>
    </reaction>
</comment>
<comment type="cofactor">
    <cofactor evidence="1">
        <name>Zn(2+)</name>
        <dbReference type="ChEBI" id="CHEBI:29105"/>
    </cofactor>
    <cofactor evidence="1">
        <name>Co(2+)</name>
        <dbReference type="ChEBI" id="CHEBI:48828"/>
    </cofactor>
    <text evidence="1">Binds 2 Zn(2+) or Co(2+) ions per subunit.</text>
</comment>
<comment type="pathway">
    <text evidence="1">Amino-acid biosynthesis; L-lysine biosynthesis via DAP pathway; LL-2,6-diaminopimelate from (S)-tetrahydrodipicolinate (succinylase route): step 3/3.</text>
</comment>
<comment type="subunit">
    <text evidence="1">Homodimer.</text>
</comment>
<comment type="similarity">
    <text evidence="1">Belongs to the peptidase M20A family. DapE subfamily.</text>
</comment>
<proteinExistence type="inferred from homology"/>
<evidence type="ECO:0000255" key="1">
    <source>
        <dbReference type="HAMAP-Rule" id="MF_01690"/>
    </source>
</evidence>
<reference key="1">
    <citation type="journal article" date="2009" name="Science">
        <title>The dynamics and time scale of ongoing genomic erosion in symbiotic bacteria.</title>
        <authorList>
            <person name="Moran N.A."/>
            <person name="McLaughlin H.J."/>
            <person name="Sorek R."/>
        </authorList>
    </citation>
    <scope>NUCLEOTIDE SEQUENCE [LARGE SCALE GENOMIC DNA]</scope>
    <source>
        <strain>Tuc7</strain>
    </source>
</reference>
<organism>
    <name type="scientific">Buchnera aphidicola subsp. Acyrthosiphon pisum (strain Tuc7)</name>
    <dbReference type="NCBI Taxonomy" id="561501"/>
    <lineage>
        <taxon>Bacteria</taxon>
        <taxon>Pseudomonadati</taxon>
        <taxon>Pseudomonadota</taxon>
        <taxon>Gammaproteobacteria</taxon>
        <taxon>Enterobacterales</taxon>
        <taxon>Erwiniaceae</taxon>
        <taxon>Buchnera</taxon>
    </lineage>
</organism>
<name>DAPE_BUCAT</name>
<accession>B8D701</accession>